<proteinExistence type="inferred from homology"/>
<name>YQGF_SYNWW</name>
<keyword id="KW-0963">Cytoplasm</keyword>
<keyword id="KW-0378">Hydrolase</keyword>
<keyword id="KW-0540">Nuclease</keyword>
<keyword id="KW-1185">Reference proteome</keyword>
<keyword id="KW-0690">Ribosome biogenesis</keyword>
<reference key="1">
    <citation type="journal article" date="2010" name="Environ. Microbiol.">
        <title>The genome of Syntrophomonas wolfei: new insights into syntrophic metabolism and biohydrogen production.</title>
        <authorList>
            <person name="Sieber J.R."/>
            <person name="Sims D.R."/>
            <person name="Han C."/>
            <person name="Kim E."/>
            <person name="Lykidis A."/>
            <person name="Lapidus A.L."/>
            <person name="McDonnald E."/>
            <person name="Rohlin L."/>
            <person name="Culley D.E."/>
            <person name="Gunsalus R."/>
            <person name="McInerney M.J."/>
        </authorList>
    </citation>
    <scope>NUCLEOTIDE SEQUENCE [LARGE SCALE GENOMIC DNA]</scope>
    <source>
        <strain>DSM 2245B / Goettingen</strain>
    </source>
</reference>
<protein>
    <recommendedName>
        <fullName evidence="1">Putative pre-16S rRNA nuclease</fullName>
        <ecNumber evidence="1">3.1.-.-</ecNumber>
    </recommendedName>
</protein>
<dbReference type="EC" id="3.1.-.-" evidence="1"/>
<dbReference type="EMBL" id="CP000448">
    <property type="protein sequence ID" value="ABI67805.1"/>
    <property type="molecule type" value="Genomic_DNA"/>
</dbReference>
<dbReference type="RefSeq" id="WP_011639913.1">
    <property type="nucleotide sequence ID" value="NC_008346.1"/>
</dbReference>
<dbReference type="SMR" id="Q0AZP9"/>
<dbReference type="STRING" id="335541.Swol_0470"/>
<dbReference type="KEGG" id="swo:Swol_0470"/>
<dbReference type="eggNOG" id="COG0816">
    <property type="taxonomic scope" value="Bacteria"/>
</dbReference>
<dbReference type="HOGENOM" id="CLU_098240_2_0_9"/>
<dbReference type="OrthoDB" id="9796140at2"/>
<dbReference type="Proteomes" id="UP000001968">
    <property type="component" value="Chromosome"/>
</dbReference>
<dbReference type="GO" id="GO:0005829">
    <property type="term" value="C:cytosol"/>
    <property type="evidence" value="ECO:0007669"/>
    <property type="project" value="TreeGrafter"/>
</dbReference>
<dbReference type="GO" id="GO:0004518">
    <property type="term" value="F:nuclease activity"/>
    <property type="evidence" value="ECO:0007669"/>
    <property type="project" value="UniProtKB-KW"/>
</dbReference>
<dbReference type="GO" id="GO:0000967">
    <property type="term" value="P:rRNA 5'-end processing"/>
    <property type="evidence" value="ECO:0007669"/>
    <property type="project" value="UniProtKB-UniRule"/>
</dbReference>
<dbReference type="CDD" id="cd16964">
    <property type="entry name" value="YqgF"/>
    <property type="match status" value="1"/>
</dbReference>
<dbReference type="Gene3D" id="3.30.420.140">
    <property type="entry name" value="YqgF/RNase H-like domain"/>
    <property type="match status" value="1"/>
</dbReference>
<dbReference type="HAMAP" id="MF_00651">
    <property type="entry name" value="Nuclease_YqgF"/>
    <property type="match status" value="1"/>
</dbReference>
<dbReference type="InterPro" id="IPR012337">
    <property type="entry name" value="RNaseH-like_sf"/>
</dbReference>
<dbReference type="InterPro" id="IPR005227">
    <property type="entry name" value="YqgF"/>
</dbReference>
<dbReference type="InterPro" id="IPR006641">
    <property type="entry name" value="YqgF/RNaseH-like_dom"/>
</dbReference>
<dbReference type="InterPro" id="IPR037027">
    <property type="entry name" value="YqgF/RNaseH-like_dom_sf"/>
</dbReference>
<dbReference type="NCBIfam" id="TIGR00250">
    <property type="entry name" value="RNAse_H_YqgF"/>
    <property type="match status" value="1"/>
</dbReference>
<dbReference type="PANTHER" id="PTHR33317">
    <property type="entry name" value="POLYNUCLEOTIDYL TRANSFERASE, RIBONUCLEASE H-LIKE SUPERFAMILY PROTEIN"/>
    <property type="match status" value="1"/>
</dbReference>
<dbReference type="PANTHER" id="PTHR33317:SF4">
    <property type="entry name" value="POLYNUCLEOTIDYL TRANSFERASE, RIBONUCLEASE H-LIKE SUPERFAMILY PROTEIN"/>
    <property type="match status" value="1"/>
</dbReference>
<dbReference type="Pfam" id="PF03652">
    <property type="entry name" value="RuvX"/>
    <property type="match status" value="1"/>
</dbReference>
<dbReference type="SMART" id="SM00732">
    <property type="entry name" value="YqgFc"/>
    <property type="match status" value="1"/>
</dbReference>
<dbReference type="SUPFAM" id="SSF53098">
    <property type="entry name" value="Ribonuclease H-like"/>
    <property type="match status" value="1"/>
</dbReference>
<sequence length="141" mass="15901">MRIMGLDLGEKRIGIAFSDPMGWTAQGHSILQRKGLKKDLSYLQELCQEFQVEKIVLGLPLNMNGTMGPKALETQEFARALQEALKIPVDFWDERLSSKSAERVLLEADLSRKRRKELIDKIAAVHILQAYLDGGSLGKDY</sequence>
<evidence type="ECO:0000255" key="1">
    <source>
        <dbReference type="HAMAP-Rule" id="MF_00651"/>
    </source>
</evidence>
<gene>
    <name type="ordered locus">Swol_0470</name>
</gene>
<organism>
    <name type="scientific">Syntrophomonas wolfei subsp. wolfei (strain DSM 2245B / Goettingen)</name>
    <dbReference type="NCBI Taxonomy" id="335541"/>
    <lineage>
        <taxon>Bacteria</taxon>
        <taxon>Bacillati</taxon>
        <taxon>Bacillota</taxon>
        <taxon>Clostridia</taxon>
        <taxon>Eubacteriales</taxon>
        <taxon>Syntrophomonadaceae</taxon>
        <taxon>Syntrophomonas</taxon>
    </lineage>
</organism>
<feature type="chain" id="PRO_1000061577" description="Putative pre-16S rRNA nuclease">
    <location>
        <begin position="1"/>
        <end position="141"/>
    </location>
</feature>
<comment type="function">
    <text evidence="1">Could be a nuclease involved in processing of the 5'-end of pre-16S rRNA.</text>
</comment>
<comment type="subcellular location">
    <subcellularLocation>
        <location evidence="1">Cytoplasm</location>
    </subcellularLocation>
</comment>
<comment type="similarity">
    <text evidence="1">Belongs to the YqgF nuclease family.</text>
</comment>
<accession>Q0AZP9</accession>